<evidence type="ECO:0000255" key="1">
    <source>
        <dbReference type="HAMAP-Rule" id="MF_00087"/>
    </source>
</evidence>
<name>HEM1_METMP</name>
<dbReference type="EC" id="1.2.1.70" evidence="1"/>
<dbReference type="EMBL" id="BX950229">
    <property type="protein sequence ID" value="CAF29644.1"/>
    <property type="molecule type" value="Genomic_DNA"/>
</dbReference>
<dbReference type="RefSeq" id="WP_011170032.1">
    <property type="nucleotide sequence ID" value="NC_005791.1"/>
</dbReference>
<dbReference type="SMR" id="Q6M130"/>
<dbReference type="STRING" id="267377.MMP0088"/>
<dbReference type="EnsemblBacteria" id="CAF29644">
    <property type="protein sequence ID" value="CAF29644"/>
    <property type="gene ID" value="MMP0088"/>
</dbReference>
<dbReference type="GeneID" id="2762055"/>
<dbReference type="KEGG" id="mmp:MMP0088"/>
<dbReference type="PATRIC" id="fig|267377.15.peg.89"/>
<dbReference type="eggNOG" id="arCOG01036">
    <property type="taxonomic scope" value="Archaea"/>
</dbReference>
<dbReference type="HOGENOM" id="CLU_035113_0_0_2"/>
<dbReference type="OrthoDB" id="4562at2157"/>
<dbReference type="UniPathway" id="UPA00251">
    <property type="reaction ID" value="UER00316"/>
</dbReference>
<dbReference type="Proteomes" id="UP000000590">
    <property type="component" value="Chromosome"/>
</dbReference>
<dbReference type="GO" id="GO:0008883">
    <property type="term" value="F:glutamyl-tRNA reductase activity"/>
    <property type="evidence" value="ECO:0007669"/>
    <property type="project" value="UniProtKB-UniRule"/>
</dbReference>
<dbReference type="GO" id="GO:0050661">
    <property type="term" value="F:NADP binding"/>
    <property type="evidence" value="ECO:0007669"/>
    <property type="project" value="InterPro"/>
</dbReference>
<dbReference type="GO" id="GO:0019353">
    <property type="term" value="P:protoporphyrinogen IX biosynthetic process from glutamate"/>
    <property type="evidence" value="ECO:0007669"/>
    <property type="project" value="TreeGrafter"/>
</dbReference>
<dbReference type="CDD" id="cd05213">
    <property type="entry name" value="NAD_bind_Glutamyl_tRNA_reduct"/>
    <property type="match status" value="1"/>
</dbReference>
<dbReference type="FunFam" id="3.40.50.720:FF:000031">
    <property type="entry name" value="Glutamyl-tRNA reductase"/>
    <property type="match status" value="1"/>
</dbReference>
<dbReference type="Gene3D" id="1.10.1200.70">
    <property type="entry name" value="Glutamyl tRNA-reductase dimerization domain"/>
    <property type="match status" value="1"/>
</dbReference>
<dbReference type="Gene3D" id="3.30.460.30">
    <property type="entry name" value="Glutamyl-tRNA reductase, N-terminal domain"/>
    <property type="match status" value="1"/>
</dbReference>
<dbReference type="Gene3D" id="3.40.50.720">
    <property type="entry name" value="NAD(P)-binding Rossmann-like Domain"/>
    <property type="match status" value="1"/>
</dbReference>
<dbReference type="HAMAP" id="MF_00087">
    <property type="entry name" value="Glu_tRNA_reductase"/>
    <property type="match status" value="1"/>
</dbReference>
<dbReference type="InterPro" id="IPR000343">
    <property type="entry name" value="4pyrrol_synth_GluRdtase"/>
</dbReference>
<dbReference type="InterPro" id="IPR015896">
    <property type="entry name" value="4pyrrol_synth_GluRdtase_dimer"/>
</dbReference>
<dbReference type="InterPro" id="IPR015895">
    <property type="entry name" value="4pyrrol_synth_GluRdtase_N"/>
</dbReference>
<dbReference type="InterPro" id="IPR018214">
    <property type="entry name" value="GluRdtase_CS"/>
</dbReference>
<dbReference type="InterPro" id="IPR036453">
    <property type="entry name" value="GluRdtase_dimer_dom_sf"/>
</dbReference>
<dbReference type="InterPro" id="IPR036343">
    <property type="entry name" value="GluRdtase_N_sf"/>
</dbReference>
<dbReference type="InterPro" id="IPR036291">
    <property type="entry name" value="NAD(P)-bd_dom_sf"/>
</dbReference>
<dbReference type="InterPro" id="IPR006151">
    <property type="entry name" value="Shikm_DH/Glu-tRNA_Rdtase"/>
</dbReference>
<dbReference type="NCBIfam" id="TIGR01035">
    <property type="entry name" value="hemA"/>
    <property type="match status" value="1"/>
</dbReference>
<dbReference type="PANTHER" id="PTHR43013">
    <property type="entry name" value="GLUTAMYL-TRNA REDUCTASE"/>
    <property type="match status" value="1"/>
</dbReference>
<dbReference type="PANTHER" id="PTHR43013:SF1">
    <property type="entry name" value="GLUTAMYL-TRNA REDUCTASE"/>
    <property type="match status" value="1"/>
</dbReference>
<dbReference type="Pfam" id="PF00745">
    <property type="entry name" value="GlutR_dimer"/>
    <property type="match status" value="1"/>
</dbReference>
<dbReference type="Pfam" id="PF05201">
    <property type="entry name" value="GlutR_N"/>
    <property type="match status" value="1"/>
</dbReference>
<dbReference type="Pfam" id="PF01488">
    <property type="entry name" value="Shikimate_DH"/>
    <property type="match status" value="1"/>
</dbReference>
<dbReference type="PIRSF" id="PIRSF000445">
    <property type="entry name" value="4pyrrol_synth_GluRdtase"/>
    <property type="match status" value="1"/>
</dbReference>
<dbReference type="SUPFAM" id="SSF69742">
    <property type="entry name" value="Glutamyl tRNA-reductase catalytic, N-terminal domain"/>
    <property type="match status" value="1"/>
</dbReference>
<dbReference type="SUPFAM" id="SSF69075">
    <property type="entry name" value="Glutamyl tRNA-reductase dimerization domain"/>
    <property type="match status" value="1"/>
</dbReference>
<dbReference type="SUPFAM" id="SSF51735">
    <property type="entry name" value="NAD(P)-binding Rossmann-fold domains"/>
    <property type="match status" value="1"/>
</dbReference>
<dbReference type="PROSITE" id="PS00747">
    <property type="entry name" value="GLUTR"/>
    <property type="match status" value="1"/>
</dbReference>
<protein>
    <recommendedName>
        <fullName evidence="1">Glutamyl-tRNA reductase</fullName>
        <shortName evidence="1">GluTR</shortName>
        <ecNumber evidence="1">1.2.1.70</ecNumber>
    </recommendedName>
</protein>
<accession>Q6M130</accession>
<gene>
    <name evidence="1" type="primary">hemA</name>
    <name type="ordered locus">MMP0088</name>
</gene>
<sequence length="382" mass="43612">MLVVRADYKKYPIPVLEKMRIDEDEFYKKYDACVVVQTCNRIEAYFDTEVNSDLNCILNDFSGFDILKGKNATFHFLKVSCGMDSMILGENQILGQIKTSFQKARELKKTSRYLDSVFLKAIHVGQRARTETKINEGSVSIGSAAVELAEKNFGLANKNVLLIGAGEIGTLVAKALMEKHIKAVIVANRTYERAETLAKELKGMAVHFDKLKEAINFSDVIICATSSPHYILKKEDLIDVGNKIIIDIANPRDVDDAVREFENINLYTIDDLRNISDKNLQKRIEEVPAVEKIIDEEYDVLMKQIEKINVEEVLKDFNNYIEEIRTKELEKAIKLSKTKNPEEIMENFSKAFAKRITHDFVSYSINTSKEDLMNSAWWKNGK</sequence>
<feature type="chain" id="PRO_0000114104" description="Glutamyl-tRNA reductase">
    <location>
        <begin position="1"/>
        <end position="382"/>
    </location>
</feature>
<feature type="active site" description="Nucleophile" evidence="1">
    <location>
        <position position="39"/>
    </location>
</feature>
<feature type="binding site" evidence="1">
    <location>
        <begin position="38"/>
        <end position="41"/>
    </location>
    <ligand>
        <name>substrate</name>
    </ligand>
</feature>
<feature type="binding site" evidence="1">
    <location>
        <position position="85"/>
    </location>
    <ligand>
        <name>substrate</name>
    </ligand>
</feature>
<feature type="binding site" evidence="1">
    <location>
        <begin position="90"/>
        <end position="92"/>
    </location>
    <ligand>
        <name>substrate</name>
    </ligand>
</feature>
<feature type="binding site" evidence="1">
    <location>
        <position position="96"/>
    </location>
    <ligand>
        <name>substrate</name>
    </ligand>
</feature>
<feature type="binding site" evidence="1">
    <location>
        <begin position="164"/>
        <end position="169"/>
    </location>
    <ligand>
        <name>NADP(+)</name>
        <dbReference type="ChEBI" id="CHEBI:58349"/>
    </ligand>
</feature>
<feature type="site" description="Important for activity" evidence="1">
    <location>
        <position position="75"/>
    </location>
</feature>
<organism>
    <name type="scientific">Methanococcus maripaludis (strain DSM 14266 / JCM 13030 / NBRC 101832 / S2 / LL)</name>
    <dbReference type="NCBI Taxonomy" id="267377"/>
    <lineage>
        <taxon>Archaea</taxon>
        <taxon>Methanobacteriati</taxon>
        <taxon>Methanobacteriota</taxon>
        <taxon>Methanomada group</taxon>
        <taxon>Methanococci</taxon>
        <taxon>Methanococcales</taxon>
        <taxon>Methanococcaceae</taxon>
        <taxon>Methanococcus</taxon>
    </lineage>
</organism>
<keyword id="KW-0521">NADP</keyword>
<keyword id="KW-0560">Oxidoreductase</keyword>
<keyword id="KW-0627">Porphyrin biosynthesis</keyword>
<keyword id="KW-1185">Reference proteome</keyword>
<comment type="function">
    <text evidence="1">Catalyzes the NADPH-dependent reduction of glutamyl-tRNA(Glu) to glutamate 1-semialdehyde (GSA).</text>
</comment>
<comment type="catalytic activity">
    <reaction evidence="1">
        <text>(S)-4-amino-5-oxopentanoate + tRNA(Glu) + NADP(+) = L-glutamyl-tRNA(Glu) + NADPH + H(+)</text>
        <dbReference type="Rhea" id="RHEA:12344"/>
        <dbReference type="Rhea" id="RHEA-COMP:9663"/>
        <dbReference type="Rhea" id="RHEA-COMP:9680"/>
        <dbReference type="ChEBI" id="CHEBI:15378"/>
        <dbReference type="ChEBI" id="CHEBI:57501"/>
        <dbReference type="ChEBI" id="CHEBI:57783"/>
        <dbReference type="ChEBI" id="CHEBI:58349"/>
        <dbReference type="ChEBI" id="CHEBI:78442"/>
        <dbReference type="ChEBI" id="CHEBI:78520"/>
        <dbReference type="EC" id="1.2.1.70"/>
    </reaction>
</comment>
<comment type="pathway">
    <text evidence="1">Porphyrin-containing compound metabolism; protoporphyrin-IX biosynthesis; 5-aminolevulinate from L-glutamyl-tRNA(Glu): step 1/2.</text>
</comment>
<comment type="subunit">
    <text evidence="1">Homodimer.</text>
</comment>
<comment type="domain">
    <text evidence="1">Possesses an unusual extended V-shaped dimeric structure with each monomer consisting of three distinct domains arranged along a curved 'spinal' alpha-helix. The N-terminal catalytic domain specifically recognizes the glutamate moiety of the substrate. The second domain is the NADPH-binding domain, and the third C-terminal domain is responsible for dimerization.</text>
</comment>
<comment type="miscellaneous">
    <text evidence="1">During catalysis, the active site Cys acts as a nucleophile attacking the alpha-carbonyl group of tRNA-bound glutamate with the formation of a thioester intermediate between enzyme and glutamate, and the concomitant release of tRNA(Glu). The thioester intermediate is finally reduced by direct hydride transfer from NADPH, to form the product GSA.</text>
</comment>
<comment type="similarity">
    <text evidence="1">Belongs to the glutamyl-tRNA reductase family.</text>
</comment>
<proteinExistence type="inferred from homology"/>
<reference key="1">
    <citation type="journal article" date="2004" name="J. Bacteriol.">
        <title>Complete genome sequence of the genetically tractable hydrogenotrophic methanogen Methanococcus maripaludis.</title>
        <authorList>
            <person name="Hendrickson E.L."/>
            <person name="Kaul R."/>
            <person name="Zhou Y."/>
            <person name="Bovee D."/>
            <person name="Chapman P."/>
            <person name="Chung J."/>
            <person name="Conway de Macario E."/>
            <person name="Dodsworth J.A."/>
            <person name="Gillett W."/>
            <person name="Graham D.E."/>
            <person name="Hackett M."/>
            <person name="Haydock A.K."/>
            <person name="Kang A."/>
            <person name="Land M.L."/>
            <person name="Levy R."/>
            <person name="Lie T.J."/>
            <person name="Major T.A."/>
            <person name="Moore B.C."/>
            <person name="Porat I."/>
            <person name="Palmeiri A."/>
            <person name="Rouse G."/>
            <person name="Saenphimmachak C."/>
            <person name="Soell D."/>
            <person name="Van Dien S."/>
            <person name="Wang T."/>
            <person name="Whitman W.B."/>
            <person name="Xia Q."/>
            <person name="Zhang Y."/>
            <person name="Larimer F.W."/>
            <person name="Olson M.V."/>
            <person name="Leigh J.A."/>
        </authorList>
    </citation>
    <scope>NUCLEOTIDE SEQUENCE [LARGE SCALE GENOMIC DNA]</scope>
    <source>
        <strain>DSM 14266 / JCM 13030 / NBRC 101832 / S2 / LL</strain>
    </source>
</reference>